<accession>B2J8J9</accession>
<evidence type="ECO:0000255" key="1">
    <source>
        <dbReference type="HAMAP-Rule" id="MF_00033"/>
    </source>
</evidence>
<sequence length="357" mass="37852">MANAPIRLLIAASGTGGHLFPAIALAEKLPDYQIEWLGVPNRLETQLVPKEYPLNTIAVEGFQQGFGLSSIRIFGKLAGSIIEVRRILKQGNFQGVFTTGGYIAGPAVIAARSLGLPVVFHESNALPGKVTRFFGPWCSAVALGFEVAAKYLPRAKNVCVGTPVRGQFLDGAINSPLDLAIPDGVPLIVVFGGSQGAVAVNKLVRESAKAWFDAGAYVVHLTGDRDPEADSLKHPQYIALPFYNNMAALLQRATLAISRSGAGSLTELAVCGTPAILIPYPFAAEDHQSYNADVFTSSGAALTLKQSELTAQILQSNVLNLLQSPQELAKMGENAHAIAVPDSAEKLAQLVREVVET</sequence>
<reference key="1">
    <citation type="journal article" date="2013" name="Plant Physiol.">
        <title>A Nostoc punctiforme Sugar Transporter Necessary to Establish a Cyanobacterium-Plant Symbiosis.</title>
        <authorList>
            <person name="Ekman M."/>
            <person name="Picossi S."/>
            <person name="Campbell E.L."/>
            <person name="Meeks J.C."/>
            <person name="Flores E."/>
        </authorList>
    </citation>
    <scope>NUCLEOTIDE SEQUENCE [LARGE SCALE GENOMIC DNA]</scope>
    <source>
        <strain>ATCC 29133 / PCC 73102</strain>
    </source>
</reference>
<keyword id="KW-0131">Cell cycle</keyword>
<keyword id="KW-0132">Cell division</keyword>
<keyword id="KW-0997">Cell inner membrane</keyword>
<keyword id="KW-1003">Cell membrane</keyword>
<keyword id="KW-0133">Cell shape</keyword>
<keyword id="KW-0961">Cell wall biogenesis/degradation</keyword>
<keyword id="KW-0328">Glycosyltransferase</keyword>
<keyword id="KW-0472">Membrane</keyword>
<keyword id="KW-0573">Peptidoglycan synthesis</keyword>
<keyword id="KW-1185">Reference proteome</keyword>
<keyword id="KW-0808">Transferase</keyword>
<organism>
    <name type="scientific">Nostoc punctiforme (strain ATCC 29133 / PCC 73102)</name>
    <dbReference type="NCBI Taxonomy" id="63737"/>
    <lineage>
        <taxon>Bacteria</taxon>
        <taxon>Bacillati</taxon>
        <taxon>Cyanobacteriota</taxon>
        <taxon>Cyanophyceae</taxon>
        <taxon>Nostocales</taxon>
        <taxon>Nostocaceae</taxon>
        <taxon>Nostoc</taxon>
    </lineage>
</organism>
<name>MURG_NOSP7</name>
<dbReference type="EC" id="2.4.1.227" evidence="1"/>
<dbReference type="EMBL" id="CP001037">
    <property type="protein sequence ID" value="ACC80976.1"/>
    <property type="molecule type" value="Genomic_DNA"/>
</dbReference>
<dbReference type="RefSeq" id="WP_012408970.1">
    <property type="nucleotide sequence ID" value="NC_010628.1"/>
</dbReference>
<dbReference type="SMR" id="B2J8J9"/>
<dbReference type="STRING" id="63737.Npun_F2411"/>
<dbReference type="CAZy" id="GT28">
    <property type="family name" value="Glycosyltransferase Family 28"/>
</dbReference>
<dbReference type="EnsemblBacteria" id="ACC80976">
    <property type="protein sequence ID" value="ACC80976"/>
    <property type="gene ID" value="Npun_F2411"/>
</dbReference>
<dbReference type="KEGG" id="npu:Npun_F2411"/>
<dbReference type="eggNOG" id="COG0707">
    <property type="taxonomic scope" value="Bacteria"/>
</dbReference>
<dbReference type="HOGENOM" id="CLU_037404_0_1_3"/>
<dbReference type="OrthoDB" id="9808936at2"/>
<dbReference type="PhylomeDB" id="B2J8J9"/>
<dbReference type="UniPathway" id="UPA00219"/>
<dbReference type="Proteomes" id="UP000001191">
    <property type="component" value="Chromosome"/>
</dbReference>
<dbReference type="GO" id="GO:0005886">
    <property type="term" value="C:plasma membrane"/>
    <property type="evidence" value="ECO:0007669"/>
    <property type="project" value="UniProtKB-SubCell"/>
</dbReference>
<dbReference type="GO" id="GO:0051991">
    <property type="term" value="F:UDP-N-acetyl-D-glucosamine:N-acetylmuramoyl-L-alanyl-D-glutamyl-meso-2,6-diaminopimelyl-D-alanyl-D-alanine-diphosphoundecaprenol 4-beta-N-acetylglucosaminlytransferase activity"/>
    <property type="evidence" value="ECO:0007669"/>
    <property type="project" value="RHEA"/>
</dbReference>
<dbReference type="GO" id="GO:0050511">
    <property type="term" value="F:undecaprenyldiphospho-muramoylpentapeptide beta-N-acetylglucosaminyltransferase activity"/>
    <property type="evidence" value="ECO:0007669"/>
    <property type="project" value="UniProtKB-UniRule"/>
</dbReference>
<dbReference type="GO" id="GO:0005975">
    <property type="term" value="P:carbohydrate metabolic process"/>
    <property type="evidence" value="ECO:0007669"/>
    <property type="project" value="InterPro"/>
</dbReference>
<dbReference type="GO" id="GO:0051301">
    <property type="term" value="P:cell division"/>
    <property type="evidence" value="ECO:0007669"/>
    <property type="project" value="UniProtKB-KW"/>
</dbReference>
<dbReference type="GO" id="GO:0071555">
    <property type="term" value="P:cell wall organization"/>
    <property type="evidence" value="ECO:0007669"/>
    <property type="project" value="UniProtKB-KW"/>
</dbReference>
<dbReference type="GO" id="GO:0030259">
    <property type="term" value="P:lipid glycosylation"/>
    <property type="evidence" value="ECO:0007669"/>
    <property type="project" value="UniProtKB-UniRule"/>
</dbReference>
<dbReference type="GO" id="GO:0009252">
    <property type="term" value="P:peptidoglycan biosynthetic process"/>
    <property type="evidence" value="ECO:0007669"/>
    <property type="project" value="UniProtKB-UniRule"/>
</dbReference>
<dbReference type="GO" id="GO:0008360">
    <property type="term" value="P:regulation of cell shape"/>
    <property type="evidence" value="ECO:0007669"/>
    <property type="project" value="UniProtKB-KW"/>
</dbReference>
<dbReference type="CDD" id="cd03785">
    <property type="entry name" value="GT28_MurG"/>
    <property type="match status" value="1"/>
</dbReference>
<dbReference type="Gene3D" id="3.40.50.2000">
    <property type="entry name" value="Glycogen Phosphorylase B"/>
    <property type="match status" value="2"/>
</dbReference>
<dbReference type="HAMAP" id="MF_00033">
    <property type="entry name" value="MurG"/>
    <property type="match status" value="1"/>
</dbReference>
<dbReference type="InterPro" id="IPR006009">
    <property type="entry name" value="GlcNAc_MurG"/>
</dbReference>
<dbReference type="InterPro" id="IPR007235">
    <property type="entry name" value="Glyco_trans_28_C"/>
</dbReference>
<dbReference type="InterPro" id="IPR004276">
    <property type="entry name" value="GlycoTrans_28_N"/>
</dbReference>
<dbReference type="NCBIfam" id="TIGR01133">
    <property type="entry name" value="murG"/>
    <property type="match status" value="1"/>
</dbReference>
<dbReference type="PANTHER" id="PTHR21015:SF22">
    <property type="entry name" value="GLYCOSYLTRANSFERASE"/>
    <property type="match status" value="1"/>
</dbReference>
<dbReference type="PANTHER" id="PTHR21015">
    <property type="entry name" value="UDP-N-ACETYLGLUCOSAMINE--N-ACETYLMURAMYL-(PENTAPEPTIDE) PYROPHOSPHORYL-UNDECAPRENOL N-ACETYLGLUCOSAMINE TRANSFERASE 1"/>
    <property type="match status" value="1"/>
</dbReference>
<dbReference type="Pfam" id="PF04101">
    <property type="entry name" value="Glyco_tran_28_C"/>
    <property type="match status" value="1"/>
</dbReference>
<dbReference type="Pfam" id="PF03033">
    <property type="entry name" value="Glyco_transf_28"/>
    <property type="match status" value="1"/>
</dbReference>
<dbReference type="SUPFAM" id="SSF53756">
    <property type="entry name" value="UDP-Glycosyltransferase/glycogen phosphorylase"/>
    <property type="match status" value="1"/>
</dbReference>
<gene>
    <name evidence="1" type="primary">murG</name>
    <name type="ordered locus">Npun_F2411</name>
</gene>
<protein>
    <recommendedName>
        <fullName evidence="1">UDP-N-acetylglucosamine--N-acetylmuramyl-(pentapeptide) pyrophosphoryl-undecaprenol N-acetylglucosamine transferase</fullName>
        <ecNumber evidence="1">2.4.1.227</ecNumber>
    </recommendedName>
    <alternativeName>
        <fullName evidence="1">Undecaprenyl-PP-MurNAc-pentapeptide-UDPGlcNAc GlcNAc transferase</fullName>
    </alternativeName>
</protein>
<feature type="chain" id="PRO_1000090454" description="UDP-N-acetylglucosamine--N-acetylmuramyl-(pentapeptide) pyrophosphoryl-undecaprenol N-acetylglucosamine transferase">
    <location>
        <begin position="1"/>
        <end position="357"/>
    </location>
</feature>
<feature type="binding site" evidence="1">
    <location>
        <begin position="15"/>
        <end position="17"/>
    </location>
    <ligand>
        <name>UDP-N-acetyl-alpha-D-glucosamine</name>
        <dbReference type="ChEBI" id="CHEBI:57705"/>
    </ligand>
</feature>
<feature type="binding site" evidence="1">
    <location>
        <position position="124"/>
    </location>
    <ligand>
        <name>UDP-N-acetyl-alpha-D-glucosamine</name>
        <dbReference type="ChEBI" id="CHEBI:57705"/>
    </ligand>
</feature>
<feature type="binding site" evidence="1">
    <location>
        <position position="165"/>
    </location>
    <ligand>
        <name>UDP-N-acetyl-alpha-D-glucosamine</name>
        <dbReference type="ChEBI" id="CHEBI:57705"/>
    </ligand>
</feature>
<feature type="binding site" evidence="1">
    <location>
        <position position="194"/>
    </location>
    <ligand>
        <name>UDP-N-acetyl-alpha-D-glucosamine</name>
        <dbReference type="ChEBI" id="CHEBI:57705"/>
    </ligand>
</feature>
<feature type="binding site" evidence="1">
    <location>
        <position position="288"/>
    </location>
    <ligand>
        <name>UDP-N-acetyl-alpha-D-glucosamine</name>
        <dbReference type="ChEBI" id="CHEBI:57705"/>
    </ligand>
</feature>
<comment type="function">
    <text evidence="1">Cell wall formation. Catalyzes the transfer of a GlcNAc subunit on undecaprenyl-pyrophosphoryl-MurNAc-pentapeptide (lipid intermediate I) to form undecaprenyl-pyrophosphoryl-MurNAc-(pentapeptide)GlcNAc (lipid intermediate II).</text>
</comment>
<comment type="catalytic activity">
    <reaction evidence="1">
        <text>di-trans,octa-cis-undecaprenyl diphospho-N-acetyl-alpha-D-muramoyl-L-alanyl-D-glutamyl-meso-2,6-diaminopimeloyl-D-alanyl-D-alanine + UDP-N-acetyl-alpha-D-glucosamine = di-trans,octa-cis-undecaprenyl diphospho-[N-acetyl-alpha-D-glucosaminyl-(1-&gt;4)]-N-acetyl-alpha-D-muramoyl-L-alanyl-D-glutamyl-meso-2,6-diaminopimeloyl-D-alanyl-D-alanine + UDP + H(+)</text>
        <dbReference type="Rhea" id="RHEA:31227"/>
        <dbReference type="ChEBI" id="CHEBI:15378"/>
        <dbReference type="ChEBI" id="CHEBI:57705"/>
        <dbReference type="ChEBI" id="CHEBI:58223"/>
        <dbReference type="ChEBI" id="CHEBI:61387"/>
        <dbReference type="ChEBI" id="CHEBI:61388"/>
        <dbReference type="EC" id="2.4.1.227"/>
    </reaction>
</comment>
<comment type="pathway">
    <text evidence="1">Cell wall biogenesis; peptidoglycan biosynthesis.</text>
</comment>
<comment type="subcellular location">
    <subcellularLocation>
        <location evidence="1">Cell inner membrane</location>
        <topology evidence="1">Peripheral membrane protein</topology>
        <orientation evidence="1">Cytoplasmic side</orientation>
    </subcellularLocation>
</comment>
<comment type="similarity">
    <text evidence="1">Belongs to the glycosyltransferase 28 family. MurG subfamily.</text>
</comment>
<proteinExistence type="inferred from homology"/>